<gene>
    <name type="ordered locus">AF_1408</name>
</gene>
<sequence>MLPGLAMSLSMDSFSVWMRKNLKSAYEGLVTQDIDFVFLSKKKKVFFFVEEKNSLNAKLRLPQRVIFMLFNEFLINDLSEWKFLGTDVLYVLEDGTVYFLNDKNEKVRVNIEDYIVYKLENYKIFKDFQIEEYMLKMLWDCRKN</sequence>
<name>Y1408_ARCFU</name>
<organism>
    <name type="scientific">Archaeoglobus fulgidus (strain ATCC 49558 / DSM 4304 / JCM 9628 / NBRC 100126 / VC-16)</name>
    <dbReference type="NCBI Taxonomy" id="224325"/>
    <lineage>
        <taxon>Archaea</taxon>
        <taxon>Methanobacteriati</taxon>
        <taxon>Methanobacteriota</taxon>
        <taxon>Archaeoglobi</taxon>
        <taxon>Archaeoglobales</taxon>
        <taxon>Archaeoglobaceae</taxon>
        <taxon>Archaeoglobus</taxon>
    </lineage>
</organism>
<proteinExistence type="predicted"/>
<accession>O28864</accession>
<dbReference type="EMBL" id="AE000782">
    <property type="protein sequence ID" value="AAB89847.1"/>
    <property type="molecule type" value="Genomic_DNA"/>
</dbReference>
<dbReference type="PIR" id="G69425">
    <property type="entry name" value="G69425"/>
</dbReference>
<dbReference type="STRING" id="224325.AF_1408"/>
<dbReference type="PaxDb" id="224325-AF_1408"/>
<dbReference type="DNASU" id="1484631"/>
<dbReference type="EnsemblBacteria" id="AAB89847">
    <property type="protein sequence ID" value="AAB89847"/>
    <property type="gene ID" value="AF_1408"/>
</dbReference>
<dbReference type="KEGG" id="afu:AF_1408"/>
<dbReference type="HOGENOM" id="CLU_1850514_0_0_2"/>
<dbReference type="Proteomes" id="UP000002199">
    <property type="component" value="Chromosome"/>
</dbReference>
<keyword id="KW-1185">Reference proteome</keyword>
<protein>
    <recommendedName>
        <fullName>Uncharacterized protein AF_1408</fullName>
    </recommendedName>
</protein>
<reference key="1">
    <citation type="journal article" date="1997" name="Nature">
        <title>The complete genome sequence of the hyperthermophilic, sulphate-reducing archaeon Archaeoglobus fulgidus.</title>
        <authorList>
            <person name="Klenk H.-P."/>
            <person name="Clayton R.A."/>
            <person name="Tomb J.-F."/>
            <person name="White O."/>
            <person name="Nelson K.E."/>
            <person name="Ketchum K.A."/>
            <person name="Dodson R.J."/>
            <person name="Gwinn M.L."/>
            <person name="Hickey E.K."/>
            <person name="Peterson J.D."/>
            <person name="Richardson D.L."/>
            <person name="Kerlavage A.R."/>
            <person name="Graham D.E."/>
            <person name="Kyrpides N.C."/>
            <person name="Fleischmann R.D."/>
            <person name="Quackenbush J."/>
            <person name="Lee N.H."/>
            <person name="Sutton G.G."/>
            <person name="Gill S.R."/>
            <person name="Kirkness E.F."/>
            <person name="Dougherty B.A."/>
            <person name="McKenney K."/>
            <person name="Adams M.D."/>
            <person name="Loftus B.J."/>
            <person name="Peterson S.N."/>
            <person name="Reich C.I."/>
            <person name="McNeil L.K."/>
            <person name="Badger J.H."/>
            <person name="Glodek A."/>
            <person name="Zhou L."/>
            <person name="Overbeek R."/>
            <person name="Gocayne J.D."/>
            <person name="Weidman J.F."/>
            <person name="McDonald L.A."/>
            <person name="Utterback T.R."/>
            <person name="Cotton M.D."/>
            <person name="Spriggs T."/>
            <person name="Artiach P."/>
            <person name="Kaine B.P."/>
            <person name="Sykes S.M."/>
            <person name="Sadow P.W."/>
            <person name="D'Andrea K.P."/>
            <person name="Bowman C."/>
            <person name="Fujii C."/>
            <person name="Garland S.A."/>
            <person name="Mason T.M."/>
            <person name="Olsen G.J."/>
            <person name="Fraser C.M."/>
            <person name="Smith H.O."/>
            <person name="Woese C.R."/>
            <person name="Venter J.C."/>
        </authorList>
    </citation>
    <scope>NUCLEOTIDE SEQUENCE [LARGE SCALE GENOMIC DNA]</scope>
    <source>
        <strain>ATCC 49558 / DSM 4304 / JCM 9628 / NBRC 100126 / VC-16</strain>
    </source>
</reference>
<feature type="chain" id="PRO_0000127998" description="Uncharacterized protein AF_1408">
    <location>
        <begin position="1"/>
        <end position="144"/>
    </location>
</feature>